<name>RL19_ICTPU</name>
<reference key="1">
    <citation type="journal article" date="2003" name="Gene">
        <title>Translational machinery of channel catfish: II. Complementary DNA and expression of the complete set of 47 60S ribosomal proteins.</title>
        <authorList>
            <person name="Patterson A.P."/>
            <person name="Karsi A."/>
            <person name="Feng J."/>
            <person name="Liu Z.J."/>
        </authorList>
    </citation>
    <scope>NUCLEOTIDE SEQUENCE [MRNA]</scope>
</reference>
<keyword id="KW-0963">Cytoplasm</keyword>
<keyword id="KW-0687">Ribonucleoprotein</keyword>
<keyword id="KW-0689">Ribosomal protein</keyword>
<dbReference type="EMBL" id="AF401574">
    <property type="protein sequence ID" value="AAK95146.1"/>
    <property type="molecule type" value="mRNA"/>
</dbReference>
<dbReference type="RefSeq" id="NP_001187213.1">
    <property type="nucleotide sequence ID" value="NM_001200284.1"/>
</dbReference>
<dbReference type="SMR" id="Q90YU8"/>
<dbReference type="STRING" id="7998.ENSIPUP00000030798"/>
<dbReference type="GeneID" id="100305049"/>
<dbReference type="KEGG" id="ipu:100305049"/>
<dbReference type="OrthoDB" id="5407653at2759"/>
<dbReference type="Proteomes" id="UP000221080">
    <property type="component" value="Chromosome 13"/>
</dbReference>
<dbReference type="GO" id="GO:0022625">
    <property type="term" value="C:cytosolic large ribosomal subunit"/>
    <property type="evidence" value="ECO:0007669"/>
    <property type="project" value="InterPro"/>
</dbReference>
<dbReference type="GO" id="GO:0003723">
    <property type="term" value="F:RNA binding"/>
    <property type="evidence" value="ECO:0007669"/>
    <property type="project" value="InterPro"/>
</dbReference>
<dbReference type="GO" id="GO:0003735">
    <property type="term" value="F:structural constituent of ribosome"/>
    <property type="evidence" value="ECO:0007669"/>
    <property type="project" value="InterPro"/>
</dbReference>
<dbReference type="GO" id="GO:0006412">
    <property type="term" value="P:translation"/>
    <property type="evidence" value="ECO:0007669"/>
    <property type="project" value="InterPro"/>
</dbReference>
<dbReference type="CDD" id="cd01417">
    <property type="entry name" value="Ribosomal_L19e_E"/>
    <property type="match status" value="1"/>
</dbReference>
<dbReference type="FunFam" id="1.10.1200.240:FF:000001">
    <property type="entry name" value="Ribosomal protein L19"/>
    <property type="match status" value="1"/>
</dbReference>
<dbReference type="FunFam" id="1.10.1650.10:FF:000001">
    <property type="entry name" value="Ribosomal protein L19"/>
    <property type="match status" value="1"/>
</dbReference>
<dbReference type="Gene3D" id="1.10.1200.240">
    <property type="match status" value="1"/>
</dbReference>
<dbReference type="Gene3D" id="1.10.1650.10">
    <property type="match status" value="1"/>
</dbReference>
<dbReference type="HAMAP" id="MF_01475">
    <property type="entry name" value="Ribosomal_eL19"/>
    <property type="match status" value="1"/>
</dbReference>
<dbReference type="InterPro" id="IPR035970">
    <property type="entry name" value="60S_ribosomal_eL19_sf"/>
</dbReference>
<dbReference type="InterPro" id="IPR039547">
    <property type="entry name" value="Ribosomal_eL19"/>
</dbReference>
<dbReference type="InterPro" id="IPR023638">
    <property type="entry name" value="Ribosomal_eL19_CS"/>
</dbReference>
<dbReference type="InterPro" id="IPR000196">
    <property type="entry name" value="Ribosomal_eL19_dom"/>
</dbReference>
<dbReference type="InterPro" id="IPR015972">
    <property type="entry name" value="Ribosomal_eL19_dom1"/>
</dbReference>
<dbReference type="InterPro" id="IPR033935">
    <property type="entry name" value="Ribosomal_eL19_euk"/>
</dbReference>
<dbReference type="NCBIfam" id="NF006343">
    <property type="entry name" value="PRK08570.1"/>
    <property type="match status" value="1"/>
</dbReference>
<dbReference type="PANTHER" id="PTHR10722">
    <property type="entry name" value="60S RIBOSOMAL PROTEIN L19"/>
    <property type="match status" value="1"/>
</dbReference>
<dbReference type="Pfam" id="PF01280">
    <property type="entry name" value="Ribosomal_L19e"/>
    <property type="match status" value="1"/>
</dbReference>
<dbReference type="Pfam" id="PF25476">
    <property type="entry name" value="Ribosomal_L19e_C"/>
    <property type="match status" value="1"/>
</dbReference>
<dbReference type="SMART" id="SM01416">
    <property type="entry name" value="Ribosomal_L19e"/>
    <property type="match status" value="1"/>
</dbReference>
<dbReference type="SUPFAM" id="SSF48140">
    <property type="entry name" value="Ribosomal protein L19 (L19e)"/>
    <property type="match status" value="1"/>
</dbReference>
<dbReference type="PROSITE" id="PS00526">
    <property type="entry name" value="RIBOSOMAL_L19E"/>
    <property type="match status" value="1"/>
</dbReference>
<organism>
    <name type="scientific">Ictalurus punctatus</name>
    <name type="common">Channel catfish</name>
    <name type="synonym">Silurus punctatus</name>
    <dbReference type="NCBI Taxonomy" id="7998"/>
    <lineage>
        <taxon>Eukaryota</taxon>
        <taxon>Metazoa</taxon>
        <taxon>Chordata</taxon>
        <taxon>Craniata</taxon>
        <taxon>Vertebrata</taxon>
        <taxon>Euteleostomi</taxon>
        <taxon>Actinopterygii</taxon>
        <taxon>Neopterygii</taxon>
        <taxon>Teleostei</taxon>
        <taxon>Ostariophysi</taxon>
        <taxon>Siluriformes</taxon>
        <taxon>Ictaluridae</taxon>
        <taxon>Ictalurus</taxon>
    </lineage>
</organism>
<proteinExistence type="evidence at transcript level"/>
<comment type="function">
    <text evidence="1">Component of the large ribosomal subunit. The ribosome is a large ribonucleoprotein complex responsible for the synthesis of proteins in the cell.</text>
</comment>
<comment type="subunit">
    <text evidence="1">Component of the large ribosomal subunit.</text>
</comment>
<comment type="subcellular location">
    <subcellularLocation>
        <location evidence="1">Cytoplasm</location>
    </subcellularLocation>
</comment>
<comment type="similarity">
    <text evidence="3">Belongs to the eukaryotic ribosomal protein eL19 family.</text>
</comment>
<protein>
    <recommendedName>
        <fullName evidence="3">Large ribosomal subunit protein eL19</fullName>
    </recommendedName>
    <alternativeName>
        <fullName>60S ribosomal protein L19</fullName>
    </alternativeName>
</protein>
<sequence length="196" mass="23424">MSMLRLQKRLASSVLRCGKKKVWLDPNETNEIANANSRQAIRKLVKDGLIIKKPVTVHSRARCRKNTLARRKGRHMGIGKRKGTANARMPEKLCWMRRMRILRRLLRRYRESKKIDRHMYHSLYLRAKGNVFKNKRILMEHIHKLKADRARKKLLSDQAEARRSKTREARKRREERLQAKKEEIIKNLSKEEEGKK</sequence>
<accession>Q90YU8</accession>
<evidence type="ECO:0000250" key="1">
    <source>
        <dbReference type="UniProtKB" id="P84098"/>
    </source>
</evidence>
<evidence type="ECO:0000256" key="2">
    <source>
        <dbReference type="SAM" id="MobiDB-lite"/>
    </source>
</evidence>
<evidence type="ECO:0000305" key="3"/>
<feature type="chain" id="PRO_0000131174" description="Large ribosomal subunit protein eL19">
    <location>
        <begin position="1"/>
        <end position="196"/>
    </location>
</feature>
<feature type="region of interest" description="Disordered" evidence="2">
    <location>
        <begin position="153"/>
        <end position="196"/>
    </location>
</feature>
<feature type="compositionally biased region" description="Basic and acidic residues" evidence="2">
    <location>
        <begin position="159"/>
        <end position="196"/>
    </location>
</feature>
<gene>
    <name type="primary">rpl19</name>
</gene>